<proteinExistence type="inferred from homology"/>
<feature type="chain" id="PRO_0000156124" description="Diphthine synthase">
    <location>
        <begin position="1"/>
        <end position="254"/>
    </location>
</feature>
<feature type="binding site" evidence="1">
    <location>
        <position position="83"/>
    </location>
    <ligand>
        <name>S-adenosyl-L-methionine</name>
        <dbReference type="ChEBI" id="CHEBI:59789"/>
    </ligand>
</feature>
<feature type="binding site" evidence="1">
    <location>
        <position position="86"/>
    </location>
    <ligand>
        <name>S-adenosyl-L-methionine</name>
        <dbReference type="ChEBI" id="CHEBI:59789"/>
    </ligand>
</feature>
<feature type="binding site" evidence="1">
    <location>
        <begin position="111"/>
        <end position="112"/>
    </location>
    <ligand>
        <name>S-adenosyl-L-methionine</name>
        <dbReference type="ChEBI" id="CHEBI:59789"/>
    </ligand>
</feature>
<feature type="binding site" evidence="1">
    <location>
        <position position="163"/>
    </location>
    <ligand>
        <name>S-adenosyl-L-methionine</name>
        <dbReference type="ChEBI" id="CHEBI:59789"/>
    </ligand>
</feature>
<feature type="binding site" evidence="1">
    <location>
        <position position="205"/>
    </location>
    <ligand>
        <name>S-adenosyl-L-methionine</name>
        <dbReference type="ChEBI" id="CHEBI:59789"/>
    </ligand>
</feature>
<keyword id="KW-0489">Methyltransferase</keyword>
<keyword id="KW-1185">Reference proteome</keyword>
<keyword id="KW-0949">S-adenosyl-L-methionine</keyword>
<keyword id="KW-0808">Transferase</keyword>
<gene>
    <name evidence="1" type="primary">dphB</name>
    <name type="ordered locus">PAE1139</name>
</gene>
<evidence type="ECO:0000255" key="1">
    <source>
        <dbReference type="HAMAP-Rule" id="MF_01084"/>
    </source>
</evidence>
<organism>
    <name type="scientific">Pyrobaculum aerophilum (strain ATCC 51768 / DSM 7523 / JCM 9630 / CIP 104966 / NBRC 100827 / IM2)</name>
    <dbReference type="NCBI Taxonomy" id="178306"/>
    <lineage>
        <taxon>Archaea</taxon>
        <taxon>Thermoproteota</taxon>
        <taxon>Thermoprotei</taxon>
        <taxon>Thermoproteales</taxon>
        <taxon>Thermoproteaceae</taxon>
        <taxon>Pyrobaculum</taxon>
    </lineage>
</organism>
<sequence>MLSLVGLGPGRGYVTEAAAEAIKNADCVFYEDYTAPLDVEALRRLARGEPIRLTRADLEDHSGRKIFECLKEGKRAVLVTGGDPMLATAHAAILALARRRGYRVEVVPGVSIICAAFSLSCLSIYKLGGVATVTYPRGGVYSTRPYDLVEQNLQRGLHTLLLLDVREDGRFMPPREGAEVLLQLEERVGRGLFKEDLPIVVVYKVGWGGSAVYATLGEIARSDLEGPAVFIVPSRLGPVEKECLEGLSARSSTR</sequence>
<accession>Q8ZXR9</accession>
<protein>
    <recommendedName>
        <fullName evidence="1">Diphthine synthase</fullName>
        <ecNumber evidence="1">2.1.1.98</ecNumber>
    </recommendedName>
    <alternativeName>
        <fullName evidence="1">Diphthamide biosynthesis methyltransferase</fullName>
    </alternativeName>
</protein>
<name>DPHB_PYRAE</name>
<comment type="function">
    <text evidence="1">S-adenosyl-L-methionine-dependent methyltransferase that catalyzes the trimethylation of the amino group of the modified target histidine residue in translation elongation factor 2 (EF-2), to form an intermediate called diphthine. The three successive methylation reactions represent the second step of diphthamide biosynthesis.</text>
</comment>
<comment type="catalytic activity">
    <reaction evidence="1">
        <text>2-[(3S)-amino-3-carboxypropyl]-L-histidyl-[translation elongation factor 2] + 3 S-adenosyl-L-methionine = diphthine-[translation elongation factor 2] + 3 S-adenosyl-L-homocysteine + 3 H(+)</text>
        <dbReference type="Rhea" id="RHEA:36415"/>
        <dbReference type="Rhea" id="RHEA-COMP:9749"/>
        <dbReference type="Rhea" id="RHEA-COMP:10172"/>
        <dbReference type="ChEBI" id="CHEBI:15378"/>
        <dbReference type="ChEBI" id="CHEBI:57856"/>
        <dbReference type="ChEBI" id="CHEBI:59789"/>
        <dbReference type="ChEBI" id="CHEBI:73995"/>
        <dbReference type="ChEBI" id="CHEBI:82696"/>
        <dbReference type="EC" id="2.1.1.98"/>
    </reaction>
</comment>
<comment type="pathway">
    <text evidence="1">Protein modification; peptidyl-diphthamide biosynthesis.</text>
</comment>
<comment type="subunit">
    <text evidence="1">Homodimer.</text>
</comment>
<comment type="similarity">
    <text evidence="1">Belongs to the diphthine synthase family.</text>
</comment>
<dbReference type="EC" id="2.1.1.98" evidence="1"/>
<dbReference type="EMBL" id="AE009441">
    <property type="protein sequence ID" value="AAL63277.1"/>
    <property type="molecule type" value="Genomic_DNA"/>
</dbReference>
<dbReference type="RefSeq" id="WP_011007749.1">
    <property type="nucleotide sequence ID" value="NC_003364.1"/>
</dbReference>
<dbReference type="SMR" id="Q8ZXR9"/>
<dbReference type="FunCoup" id="Q8ZXR9">
    <property type="interactions" value="182"/>
</dbReference>
<dbReference type="STRING" id="178306.PAE1139"/>
<dbReference type="EnsemblBacteria" id="AAL63277">
    <property type="protein sequence ID" value="AAL63277"/>
    <property type="gene ID" value="PAE1139"/>
</dbReference>
<dbReference type="GeneID" id="1465515"/>
<dbReference type="KEGG" id="pai:PAE1139"/>
<dbReference type="PATRIC" id="fig|178306.9.peg.841"/>
<dbReference type="eggNOG" id="arCOG04161">
    <property type="taxonomic scope" value="Archaea"/>
</dbReference>
<dbReference type="HOGENOM" id="CLU_066040_0_0_2"/>
<dbReference type="InParanoid" id="Q8ZXR9"/>
<dbReference type="UniPathway" id="UPA00559"/>
<dbReference type="Proteomes" id="UP000002439">
    <property type="component" value="Chromosome"/>
</dbReference>
<dbReference type="GO" id="GO:0004164">
    <property type="term" value="F:diphthine synthase activity"/>
    <property type="evidence" value="ECO:0007669"/>
    <property type="project" value="UniProtKB-UniRule"/>
</dbReference>
<dbReference type="GO" id="GO:0032259">
    <property type="term" value="P:methylation"/>
    <property type="evidence" value="ECO:0007669"/>
    <property type="project" value="UniProtKB-KW"/>
</dbReference>
<dbReference type="GO" id="GO:0017183">
    <property type="term" value="P:protein histidyl modification to diphthamide"/>
    <property type="evidence" value="ECO:0007669"/>
    <property type="project" value="UniProtKB-UniRule"/>
</dbReference>
<dbReference type="CDD" id="cd11647">
    <property type="entry name" value="DHP5_DphB"/>
    <property type="match status" value="1"/>
</dbReference>
<dbReference type="Gene3D" id="3.40.1010.10">
    <property type="entry name" value="Cobalt-precorrin-4 Transmethylase, Domain 1"/>
    <property type="match status" value="1"/>
</dbReference>
<dbReference type="Gene3D" id="3.30.950.10">
    <property type="entry name" value="Methyltransferase, Cobalt-precorrin-4 Transmethylase, Domain 2"/>
    <property type="match status" value="1"/>
</dbReference>
<dbReference type="HAMAP" id="MF_01084">
    <property type="entry name" value="Diphthine_synth"/>
    <property type="match status" value="1"/>
</dbReference>
<dbReference type="InterPro" id="IPR000878">
    <property type="entry name" value="4pyrrol_Mease"/>
</dbReference>
<dbReference type="InterPro" id="IPR035996">
    <property type="entry name" value="4pyrrol_Methylase_sf"/>
</dbReference>
<dbReference type="InterPro" id="IPR014777">
    <property type="entry name" value="4pyrrole_Mease_sub1"/>
</dbReference>
<dbReference type="InterPro" id="IPR014776">
    <property type="entry name" value="4pyrrole_Mease_sub2"/>
</dbReference>
<dbReference type="InterPro" id="IPR004551">
    <property type="entry name" value="Dphthn_synthase"/>
</dbReference>
<dbReference type="NCBIfam" id="TIGR00522">
    <property type="entry name" value="dph5"/>
    <property type="match status" value="1"/>
</dbReference>
<dbReference type="PANTHER" id="PTHR10882:SF0">
    <property type="entry name" value="DIPHTHINE METHYL ESTER SYNTHASE"/>
    <property type="match status" value="1"/>
</dbReference>
<dbReference type="PANTHER" id="PTHR10882">
    <property type="entry name" value="DIPHTHINE SYNTHASE"/>
    <property type="match status" value="1"/>
</dbReference>
<dbReference type="Pfam" id="PF00590">
    <property type="entry name" value="TP_methylase"/>
    <property type="match status" value="1"/>
</dbReference>
<dbReference type="PIRSF" id="PIRSF036432">
    <property type="entry name" value="Diphthine_synth"/>
    <property type="match status" value="1"/>
</dbReference>
<dbReference type="SUPFAM" id="SSF53790">
    <property type="entry name" value="Tetrapyrrole methylase"/>
    <property type="match status" value="1"/>
</dbReference>
<reference key="1">
    <citation type="journal article" date="2002" name="Proc. Natl. Acad. Sci. U.S.A.">
        <title>Genome sequence of the hyperthermophilic crenarchaeon Pyrobaculum aerophilum.</title>
        <authorList>
            <person name="Fitz-Gibbon S.T."/>
            <person name="Ladner H."/>
            <person name="Kim U.-J."/>
            <person name="Stetter K.O."/>
            <person name="Simon M.I."/>
            <person name="Miller J.H."/>
        </authorList>
    </citation>
    <scope>NUCLEOTIDE SEQUENCE [LARGE SCALE GENOMIC DNA]</scope>
    <source>
        <strain>ATCC 51768 / DSM 7523 / JCM 9630 / CIP 104966 / NBRC 100827 / IM2</strain>
    </source>
</reference>